<accession>Q0VQF4</accession>
<organism>
    <name type="scientific">Alcanivorax borkumensis (strain ATCC 700651 / DSM 11573 / NCIMB 13689 / SK2)</name>
    <dbReference type="NCBI Taxonomy" id="393595"/>
    <lineage>
        <taxon>Bacteria</taxon>
        <taxon>Pseudomonadati</taxon>
        <taxon>Pseudomonadota</taxon>
        <taxon>Gammaproteobacteria</taxon>
        <taxon>Oceanospirillales</taxon>
        <taxon>Alcanivoracaceae</taxon>
        <taxon>Alcanivorax</taxon>
    </lineage>
</organism>
<gene>
    <name evidence="1" type="primary">frr</name>
    <name type="ordered locus">ABO_1146</name>
</gene>
<sequence>MIDDIRSDAQSRMKKSLEALDTAMKRVRTGRAHPSLLDNITIEYYGAETPLNQMGNISVEEGRTLTISPFDKSLIPQIERAILMSDLGLNPSTSGTLIRLPLPPLTEETRRDLVKVVRAEAEQARVSIRNIRRDANSDLKELLKEKEISEDEQRRGEEQIQQLTDKMVAEVEGVLKEKEEELMTV</sequence>
<evidence type="ECO:0000255" key="1">
    <source>
        <dbReference type="HAMAP-Rule" id="MF_00040"/>
    </source>
</evidence>
<reference key="1">
    <citation type="journal article" date="2006" name="Nat. Biotechnol.">
        <title>Genome sequence of the ubiquitous hydrocarbon-degrading marine bacterium Alcanivorax borkumensis.</title>
        <authorList>
            <person name="Schneiker S."/>
            <person name="Martins dos Santos V.A.P."/>
            <person name="Bartels D."/>
            <person name="Bekel T."/>
            <person name="Brecht M."/>
            <person name="Buhrmester J."/>
            <person name="Chernikova T.N."/>
            <person name="Denaro R."/>
            <person name="Ferrer M."/>
            <person name="Gertler C."/>
            <person name="Goesmann A."/>
            <person name="Golyshina O.V."/>
            <person name="Kaminski F."/>
            <person name="Khachane A.N."/>
            <person name="Lang S."/>
            <person name="Linke B."/>
            <person name="McHardy A.C."/>
            <person name="Meyer F."/>
            <person name="Nechitaylo T."/>
            <person name="Puehler A."/>
            <person name="Regenhardt D."/>
            <person name="Rupp O."/>
            <person name="Sabirova J.S."/>
            <person name="Selbitschka W."/>
            <person name="Yakimov M.M."/>
            <person name="Timmis K.N."/>
            <person name="Vorhoelter F.-J."/>
            <person name="Weidner S."/>
            <person name="Kaiser O."/>
            <person name="Golyshin P.N."/>
        </authorList>
    </citation>
    <scope>NUCLEOTIDE SEQUENCE [LARGE SCALE GENOMIC DNA]</scope>
    <source>
        <strain>ATCC 700651 / DSM 11573 / NCIMB 13689 / SK2</strain>
    </source>
</reference>
<comment type="function">
    <text evidence="1">Responsible for the release of ribosomes from messenger RNA at the termination of protein biosynthesis. May increase the efficiency of translation by recycling ribosomes from one round of translation to another.</text>
</comment>
<comment type="subcellular location">
    <subcellularLocation>
        <location evidence="1">Cytoplasm</location>
    </subcellularLocation>
</comment>
<comment type="similarity">
    <text evidence="1">Belongs to the RRF family.</text>
</comment>
<dbReference type="EMBL" id="AM286690">
    <property type="protein sequence ID" value="CAL16594.1"/>
    <property type="molecule type" value="Genomic_DNA"/>
</dbReference>
<dbReference type="RefSeq" id="WP_011588429.1">
    <property type="nucleotide sequence ID" value="NC_008260.1"/>
</dbReference>
<dbReference type="SMR" id="Q0VQF4"/>
<dbReference type="STRING" id="393595.ABO_1146"/>
<dbReference type="KEGG" id="abo:ABO_1146"/>
<dbReference type="eggNOG" id="COG0233">
    <property type="taxonomic scope" value="Bacteria"/>
</dbReference>
<dbReference type="HOGENOM" id="CLU_073981_2_1_6"/>
<dbReference type="OrthoDB" id="9804006at2"/>
<dbReference type="Proteomes" id="UP000008871">
    <property type="component" value="Chromosome"/>
</dbReference>
<dbReference type="GO" id="GO:0005829">
    <property type="term" value="C:cytosol"/>
    <property type="evidence" value="ECO:0007669"/>
    <property type="project" value="GOC"/>
</dbReference>
<dbReference type="GO" id="GO:0043023">
    <property type="term" value="F:ribosomal large subunit binding"/>
    <property type="evidence" value="ECO:0007669"/>
    <property type="project" value="TreeGrafter"/>
</dbReference>
<dbReference type="GO" id="GO:0002184">
    <property type="term" value="P:cytoplasmic translational termination"/>
    <property type="evidence" value="ECO:0007669"/>
    <property type="project" value="TreeGrafter"/>
</dbReference>
<dbReference type="CDD" id="cd00520">
    <property type="entry name" value="RRF"/>
    <property type="match status" value="1"/>
</dbReference>
<dbReference type="FunFam" id="1.10.132.20:FF:000001">
    <property type="entry name" value="Ribosome-recycling factor"/>
    <property type="match status" value="1"/>
</dbReference>
<dbReference type="FunFam" id="3.30.1360.40:FF:000001">
    <property type="entry name" value="Ribosome-recycling factor"/>
    <property type="match status" value="1"/>
</dbReference>
<dbReference type="Gene3D" id="3.30.1360.40">
    <property type="match status" value="1"/>
</dbReference>
<dbReference type="Gene3D" id="1.10.132.20">
    <property type="entry name" value="Ribosome-recycling factor"/>
    <property type="match status" value="1"/>
</dbReference>
<dbReference type="HAMAP" id="MF_00040">
    <property type="entry name" value="RRF"/>
    <property type="match status" value="1"/>
</dbReference>
<dbReference type="InterPro" id="IPR002661">
    <property type="entry name" value="Ribosome_recyc_fac"/>
</dbReference>
<dbReference type="InterPro" id="IPR023584">
    <property type="entry name" value="Ribosome_recyc_fac_dom"/>
</dbReference>
<dbReference type="InterPro" id="IPR036191">
    <property type="entry name" value="RRF_sf"/>
</dbReference>
<dbReference type="NCBIfam" id="TIGR00496">
    <property type="entry name" value="frr"/>
    <property type="match status" value="1"/>
</dbReference>
<dbReference type="PANTHER" id="PTHR20982:SF3">
    <property type="entry name" value="MITOCHONDRIAL RIBOSOME RECYCLING FACTOR PSEUDO 1"/>
    <property type="match status" value="1"/>
</dbReference>
<dbReference type="PANTHER" id="PTHR20982">
    <property type="entry name" value="RIBOSOME RECYCLING FACTOR"/>
    <property type="match status" value="1"/>
</dbReference>
<dbReference type="Pfam" id="PF01765">
    <property type="entry name" value="RRF"/>
    <property type="match status" value="1"/>
</dbReference>
<dbReference type="SUPFAM" id="SSF55194">
    <property type="entry name" value="Ribosome recycling factor, RRF"/>
    <property type="match status" value="1"/>
</dbReference>
<keyword id="KW-0963">Cytoplasm</keyword>
<keyword id="KW-0648">Protein biosynthesis</keyword>
<keyword id="KW-1185">Reference proteome</keyword>
<feature type="chain" id="PRO_1000003101" description="Ribosome-recycling factor">
    <location>
        <begin position="1"/>
        <end position="185"/>
    </location>
</feature>
<protein>
    <recommendedName>
        <fullName evidence="1">Ribosome-recycling factor</fullName>
        <shortName evidence="1">RRF</shortName>
    </recommendedName>
    <alternativeName>
        <fullName evidence="1">Ribosome-releasing factor</fullName>
    </alternativeName>
</protein>
<name>RRF_ALCBS</name>
<proteinExistence type="inferred from homology"/>